<feature type="chain" id="PRO_1000089319" description="Adenylosuccinate synthetase">
    <location>
        <begin position="1"/>
        <end position="434"/>
    </location>
</feature>
<feature type="active site" description="Proton acceptor" evidence="1">
    <location>
        <position position="16"/>
    </location>
</feature>
<feature type="active site" description="Proton donor" evidence="1">
    <location>
        <position position="44"/>
    </location>
</feature>
<feature type="binding site" evidence="1">
    <location>
        <begin position="15"/>
        <end position="21"/>
    </location>
    <ligand>
        <name>GTP</name>
        <dbReference type="ChEBI" id="CHEBI:37565"/>
    </ligand>
</feature>
<feature type="binding site" description="in other chain" evidence="1">
    <location>
        <begin position="16"/>
        <end position="19"/>
    </location>
    <ligand>
        <name>IMP</name>
        <dbReference type="ChEBI" id="CHEBI:58053"/>
        <note>ligand shared between dimeric partners</note>
    </ligand>
</feature>
<feature type="binding site" evidence="1">
    <location>
        <position position="16"/>
    </location>
    <ligand>
        <name>Mg(2+)</name>
        <dbReference type="ChEBI" id="CHEBI:18420"/>
    </ligand>
</feature>
<feature type="binding site" description="in other chain" evidence="1">
    <location>
        <begin position="41"/>
        <end position="44"/>
    </location>
    <ligand>
        <name>IMP</name>
        <dbReference type="ChEBI" id="CHEBI:58053"/>
        <note>ligand shared between dimeric partners</note>
    </ligand>
</feature>
<feature type="binding site" evidence="1">
    <location>
        <begin position="43"/>
        <end position="45"/>
    </location>
    <ligand>
        <name>GTP</name>
        <dbReference type="ChEBI" id="CHEBI:37565"/>
    </ligand>
</feature>
<feature type="binding site" evidence="1">
    <location>
        <position position="43"/>
    </location>
    <ligand>
        <name>Mg(2+)</name>
        <dbReference type="ChEBI" id="CHEBI:18420"/>
    </ligand>
</feature>
<feature type="binding site" description="in other chain" evidence="1">
    <location>
        <position position="133"/>
    </location>
    <ligand>
        <name>IMP</name>
        <dbReference type="ChEBI" id="CHEBI:58053"/>
        <note>ligand shared between dimeric partners</note>
    </ligand>
</feature>
<feature type="binding site" evidence="1">
    <location>
        <position position="147"/>
    </location>
    <ligand>
        <name>IMP</name>
        <dbReference type="ChEBI" id="CHEBI:58053"/>
        <note>ligand shared between dimeric partners</note>
    </ligand>
</feature>
<feature type="binding site" description="in other chain" evidence="1">
    <location>
        <position position="228"/>
    </location>
    <ligand>
        <name>IMP</name>
        <dbReference type="ChEBI" id="CHEBI:58053"/>
        <note>ligand shared between dimeric partners</note>
    </ligand>
</feature>
<feature type="binding site" description="in other chain" evidence="1">
    <location>
        <position position="243"/>
    </location>
    <ligand>
        <name>IMP</name>
        <dbReference type="ChEBI" id="CHEBI:58053"/>
        <note>ligand shared between dimeric partners</note>
    </ligand>
</feature>
<feature type="binding site" evidence="1">
    <location>
        <begin position="303"/>
        <end position="309"/>
    </location>
    <ligand>
        <name>substrate</name>
    </ligand>
</feature>
<feature type="binding site" description="in other chain" evidence="1">
    <location>
        <position position="307"/>
    </location>
    <ligand>
        <name>IMP</name>
        <dbReference type="ChEBI" id="CHEBI:58053"/>
        <note>ligand shared between dimeric partners</note>
    </ligand>
</feature>
<feature type="binding site" evidence="1">
    <location>
        <position position="309"/>
    </location>
    <ligand>
        <name>GTP</name>
        <dbReference type="ChEBI" id="CHEBI:37565"/>
    </ligand>
</feature>
<feature type="binding site" evidence="1">
    <location>
        <begin position="335"/>
        <end position="337"/>
    </location>
    <ligand>
        <name>GTP</name>
        <dbReference type="ChEBI" id="CHEBI:37565"/>
    </ligand>
</feature>
<feature type="binding site" evidence="1">
    <location>
        <begin position="418"/>
        <end position="420"/>
    </location>
    <ligand>
        <name>GTP</name>
        <dbReference type="ChEBI" id="CHEBI:37565"/>
    </ligand>
</feature>
<proteinExistence type="inferred from homology"/>
<accession>B4RK98</accession>
<reference key="1">
    <citation type="journal article" date="2008" name="J. Bacteriol.">
        <title>Complete genome sequence of Neisseria gonorrhoeae NCCP11945.</title>
        <authorList>
            <person name="Chung G.T."/>
            <person name="Yoo J.S."/>
            <person name="Oh H.B."/>
            <person name="Lee Y.S."/>
            <person name="Cha S.H."/>
            <person name="Kim S.J."/>
            <person name="Yoo C.K."/>
        </authorList>
    </citation>
    <scope>NUCLEOTIDE SEQUENCE [LARGE SCALE GENOMIC DNA]</scope>
    <source>
        <strain>NCCP11945</strain>
    </source>
</reference>
<organism>
    <name type="scientific">Neisseria gonorrhoeae (strain NCCP11945)</name>
    <dbReference type="NCBI Taxonomy" id="521006"/>
    <lineage>
        <taxon>Bacteria</taxon>
        <taxon>Pseudomonadati</taxon>
        <taxon>Pseudomonadota</taxon>
        <taxon>Betaproteobacteria</taxon>
        <taxon>Neisseriales</taxon>
        <taxon>Neisseriaceae</taxon>
        <taxon>Neisseria</taxon>
    </lineage>
</organism>
<gene>
    <name evidence="1" type="primary">purA</name>
    <name type="ordered locus">NGK_0558</name>
</gene>
<keyword id="KW-0963">Cytoplasm</keyword>
<keyword id="KW-0342">GTP-binding</keyword>
<keyword id="KW-0436">Ligase</keyword>
<keyword id="KW-0460">Magnesium</keyword>
<keyword id="KW-0479">Metal-binding</keyword>
<keyword id="KW-0547">Nucleotide-binding</keyword>
<keyword id="KW-0658">Purine biosynthesis</keyword>
<protein>
    <recommendedName>
        <fullName evidence="1">Adenylosuccinate synthetase</fullName>
        <shortName evidence="1">AMPSase</shortName>
        <shortName evidence="1">AdSS</shortName>
        <ecNumber evidence="1">6.3.4.4</ecNumber>
    </recommendedName>
    <alternativeName>
        <fullName evidence="1">IMP--aspartate ligase</fullName>
    </alternativeName>
</protein>
<dbReference type="EC" id="6.3.4.4" evidence="1"/>
<dbReference type="EMBL" id="CP001050">
    <property type="protein sequence ID" value="ACF29249.1"/>
    <property type="molecule type" value="Genomic_DNA"/>
</dbReference>
<dbReference type="SMR" id="B4RK98"/>
<dbReference type="KEGG" id="ngk:NGK_0558"/>
<dbReference type="HOGENOM" id="CLU_029848_0_0_4"/>
<dbReference type="UniPathway" id="UPA00075">
    <property type="reaction ID" value="UER00335"/>
</dbReference>
<dbReference type="Proteomes" id="UP000002564">
    <property type="component" value="Chromosome"/>
</dbReference>
<dbReference type="GO" id="GO:0005737">
    <property type="term" value="C:cytoplasm"/>
    <property type="evidence" value="ECO:0007669"/>
    <property type="project" value="UniProtKB-SubCell"/>
</dbReference>
<dbReference type="GO" id="GO:0004019">
    <property type="term" value="F:adenylosuccinate synthase activity"/>
    <property type="evidence" value="ECO:0007669"/>
    <property type="project" value="UniProtKB-UniRule"/>
</dbReference>
<dbReference type="GO" id="GO:0005525">
    <property type="term" value="F:GTP binding"/>
    <property type="evidence" value="ECO:0007669"/>
    <property type="project" value="UniProtKB-UniRule"/>
</dbReference>
<dbReference type="GO" id="GO:0000287">
    <property type="term" value="F:magnesium ion binding"/>
    <property type="evidence" value="ECO:0007669"/>
    <property type="project" value="UniProtKB-UniRule"/>
</dbReference>
<dbReference type="GO" id="GO:0044208">
    <property type="term" value="P:'de novo' AMP biosynthetic process"/>
    <property type="evidence" value="ECO:0007669"/>
    <property type="project" value="UniProtKB-UniRule"/>
</dbReference>
<dbReference type="GO" id="GO:0046040">
    <property type="term" value="P:IMP metabolic process"/>
    <property type="evidence" value="ECO:0007669"/>
    <property type="project" value="TreeGrafter"/>
</dbReference>
<dbReference type="CDD" id="cd03108">
    <property type="entry name" value="AdSS"/>
    <property type="match status" value="1"/>
</dbReference>
<dbReference type="FunFam" id="1.10.300.10:FF:000001">
    <property type="entry name" value="Adenylosuccinate synthetase"/>
    <property type="match status" value="1"/>
</dbReference>
<dbReference type="FunFam" id="3.90.170.10:FF:000001">
    <property type="entry name" value="Adenylosuccinate synthetase"/>
    <property type="match status" value="1"/>
</dbReference>
<dbReference type="Gene3D" id="3.40.440.10">
    <property type="entry name" value="Adenylosuccinate Synthetase, subunit A, domain 1"/>
    <property type="match status" value="1"/>
</dbReference>
<dbReference type="Gene3D" id="1.10.300.10">
    <property type="entry name" value="Adenylosuccinate Synthetase, subunit A, domain 2"/>
    <property type="match status" value="1"/>
</dbReference>
<dbReference type="Gene3D" id="3.90.170.10">
    <property type="entry name" value="Adenylosuccinate Synthetase, subunit A, domain 3"/>
    <property type="match status" value="1"/>
</dbReference>
<dbReference type="HAMAP" id="MF_00011">
    <property type="entry name" value="Adenylosucc_synth"/>
    <property type="match status" value="1"/>
</dbReference>
<dbReference type="InterPro" id="IPR018220">
    <property type="entry name" value="Adenylosuccin_syn_GTP-bd"/>
</dbReference>
<dbReference type="InterPro" id="IPR033128">
    <property type="entry name" value="Adenylosuccin_syn_Lys_AS"/>
</dbReference>
<dbReference type="InterPro" id="IPR042109">
    <property type="entry name" value="Adenylosuccinate_synth_dom1"/>
</dbReference>
<dbReference type="InterPro" id="IPR042110">
    <property type="entry name" value="Adenylosuccinate_synth_dom2"/>
</dbReference>
<dbReference type="InterPro" id="IPR042111">
    <property type="entry name" value="Adenylosuccinate_synth_dom3"/>
</dbReference>
<dbReference type="InterPro" id="IPR001114">
    <property type="entry name" value="Adenylosuccinate_synthetase"/>
</dbReference>
<dbReference type="InterPro" id="IPR027417">
    <property type="entry name" value="P-loop_NTPase"/>
</dbReference>
<dbReference type="NCBIfam" id="NF002223">
    <property type="entry name" value="PRK01117.1"/>
    <property type="match status" value="1"/>
</dbReference>
<dbReference type="NCBIfam" id="TIGR00184">
    <property type="entry name" value="purA"/>
    <property type="match status" value="1"/>
</dbReference>
<dbReference type="PANTHER" id="PTHR11846">
    <property type="entry name" value="ADENYLOSUCCINATE SYNTHETASE"/>
    <property type="match status" value="1"/>
</dbReference>
<dbReference type="PANTHER" id="PTHR11846:SF0">
    <property type="entry name" value="ADENYLOSUCCINATE SYNTHETASE"/>
    <property type="match status" value="1"/>
</dbReference>
<dbReference type="Pfam" id="PF00709">
    <property type="entry name" value="Adenylsucc_synt"/>
    <property type="match status" value="1"/>
</dbReference>
<dbReference type="SMART" id="SM00788">
    <property type="entry name" value="Adenylsucc_synt"/>
    <property type="match status" value="1"/>
</dbReference>
<dbReference type="SUPFAM" id="SSF52540">
    <property type="entry name" value="P-loop containing nucleoside triphosphate hydrolases"/>
    <property type="match status" value="1"/>
</dbReference>
<dbReference type="PROSITE" id="PS01266">
    <property type="entry name" value="ADENYLOSUCCIN_SYN_1"/>
    <property type="match status" value="1"/>
</dbReference>
<dbReference type="PROSITE" id="PS00513">
    <property type="entry name" value="ADENYLOSUCCIN_SYN_2"/>
    <property type="match status" value="1"/>
</dbReference>
<name>PURA_NEIG2</name>
<sequence>MAMAKNVVVIGAQWGDEGKGKIVDWLAEEAGGVVRFQGGHNAGHTLVVGGKKTILRLIPSGILHEGLDCFIGSGVVVSPEALLGEIDELNAAGVKNVEGRLKIAPTCPLILPYHIALDQAREASRGKGKIGTTGRGIGPAYEDKVARRAIRAADLLHPEKLREKLDAVLAYYNVQLQYLHNAGPVKAEDVMAVIEKVAPRIAPMIADVSRVLNEKNKNGEKLLFEGAQGALLDIDYGTYPFVTSSNCLAGAASAGAGVGPQMLDYVLGIVKAYTTRVGSGPFPTELFDEVGAGLAERGHEFGSVTGRARRCGWFDAAALKRSIQINGISGMCITKLDVMDGVETINICVGYELPGGGKTDILPCGSDAVETCKPIYETMPGWRESTVGVKSYDALPANAKAYLKRIEEVCGAPVAIVSTGPDREETIVLHHPFA</sequence>
<comment type="function">
    <text evidence="1">Plays an important role in the de novo pathway of purine nucleotide biosynthesis. Catalyzes the first committed step in the biosynthesis of AMP from IMP.</text>
</comment>
<comment type="catalytic activity">
    <reaction evidence="1">
        <text>IMP + L-aspartate + GTP = N(6)-(1,2-dicarboxyethyl)-AMP + GDP + phosphate + 2 H(+)</text>
        <dbReference type="Rhea" id="RHEA:15753"/>
        <dbReference type="ChEBI" id="CHEBI:15378"/>
        <dbReference type="ChEBI" id="CHEBI:29991"/>
        <dbReference type="ChEBI" id="CHEBI:37565"/>
        <dbReference type="ChEBI" id="CHEBI:43474"/>
        <dbReference type="ChEBI" id="CHEBI:57567"/>
        <dbReference type="ChEBI" id="CHEBI:58053"/>
        <dbReference type="ChEBI" id="CHEBI:58189"/>
        <dbReference type="EC" id="6.3.4.4"/>
    </reaction>
</comment>
<comment type="cofactor">
    <cofactor evidence="1">
        <name>Mg(2+)</name>
        <dbReference type="ChEBI" id="CHEBI:18420"/>
    </cofactor>
    <text evidence="1">Binds 1 Mg(2+) ion per subunit.</text>
</comment>
<comment type="pathway">
    <text evidence="1">Purine metabolism; AMP biosynthesis via de novo pathway; AMP from IMP: step 1/2.</text>
</comment>
<comment type="subunit">
    <text evidence="1">Homodimer.</text>
</comment>
<comment type="subcellular location">
    <subcellularLocation>
        <location evidence="1">Cytoplasm</location>
    </subcellularLocation>
</comment>
<comment type="similarity">
    <text evidence="1">Belongs to the adenylosuccinate synthetase family.</text>
</comment>
<evidence type="ECO:0000255" key="1">
    <source>
        <dbReference type="HAMAP-Rule" id="MF_00011"/>
    </source>
</evidence>